<comment type="function">
    <text evidence="1">Involved in the regulation of the intracellular balance of NAD and NADP, and is a key enzyme in the biosynthesis of NADP. Catalyzes specifically the phosphorylation on 2'-hydroxyl of the adenosine moiety of NAD to yield NADP.</text>
</comment>
<comment type="catalytic activity">
    <reaction evidence="1">
        <text>NAD(+) + ATP = ADP + NADP(+) + H(+)</text>
        <dbReference type="Rhea" id="RHEA:18629"/>
        <dbReference type="ChEBI" id="CHEBI:15378"/>
        <dbReference type="ChEBI" id="CHEBI:30616"/>
        <dbReference type="ChEBI" id="CHEBI:57540"/>
        <dbReference type="ChEBI" id="CHEBI:58349"/>
        <dbReference type="ChEBI" id="CHEBI:456216"/>
        <dbReference type="EC" id="2.7.1.23"/>
    </reaction>
</comment>
<comment type="cofactor">
    <cofactor evidence="1">
        <name>a divalent metal cation</name>
        <dbReference type="ChEBI" id="CHEBI:60240"/>
    </cofactor>
</comment>
<comment type="subcellular location">
    <subcellularLocation>
        <location evidence="1">Cytoplasm</location>
    </subcellularLocation>
</comment>
<comment type="similarity">
    <text evidence="1">Belongs to the NAD kinase family.</text>
</comment>
<keyword id="KW-0067">ATP-binding</keyword>
<keyword id="KW-0963">Cytoplasm</keyword>
<keyword id="KW-0418">Kinase</keyword>
<keyword id="KW-0520">NAD</keyword>
<keyword id="KW-0521">NADP</keyword>
<keyword id="KW-0547">Nucleotide-binding</keyword>
<keyword id="KW-0808">Transferase</keyword>
<reference key="1">
    <citation type="journal article" date="2005" name="Proc. Natl. Acad. Sci. U.S.A.">
        <title>Genome analysis of multiple pathogenic isolates of Streptococcus agalactiae: implications for the microbial 'pan-genome'.</title>
        <authorList>
            <person name="Tettelin H."/>
            <person name="Masignani V."/>
            <person name="Cieslewicz M.J."/>
            <person name="Donati C."/>
            <person name="Medini D."/>
            <person name="Ward N.L."/>
            <person name="Angiuoli S.V."/>
            <person name="Crabtree J."/>
            <person name="Jones A.L."/>
            <person name="Durkin A.S."/>
            <person name="DeBoy R.T."/>
            <person name="Davidsen T.M."/>
            <person name="Mora M."/>
            <person name="Scarselli M."/>
            <person name="Margarit y Ros I."/>
            <person name="Peterson J.D."/>
            <person name="Hauser C.R."/>
            <person name="Sundaram J.P."/>
            <person name="Nelson W.C."/>
            <person name="Madupu R."/>
            <person name="Brinkac L.M."/>
            <person name="Dodson R.J."/>
            <person name="Rosovitz M.J."/>
            <person name="Sullivan S.A."/>
            <person name="Daugherty S.C."/>
            <person name="Haft D.H."/>
            <person name="Selengut J."/>
            <person name="Gwinn M.L."/>
            <person name="Zhou L."/>
            <person name="Zafar N."/>
            <person name="Khouri H."/>
            <person name="Radune D."/>
            <person name="Dimitrov G."/>
            <person name="Watkins K."/>
            <person name="O'Connor K.J."/>
            <person name="Smith S."/>
            <person name="Utterback T.R."/>
            <person name="White O."/>
            <person name="Rubens C.E."/>
            <person name="Grandi G."/>
            <person name="Madoff L.C."/>
            <person name="Kasper D.L."/>
            <person name="Telford J.L."/>
            <person name="Wessels M.R."/>
            <person name="Rappuoli R."/>
            <person name="Fraser C.M."/>
        </authorList>
    </citation>
    <scope>NUCLEOTIDE SEQUENCE [LARGE SCALE GENOMIC DNA]</scope>
    <source>
        <strain>ATCC 27591 / A909 / CDC SS700</strain>
    </source>
</reference>
<proteinExistence type="inferred from homology"/>
<organism>
    <name type="scientific">Streptococcus agalactiae serotype Ia (strain ATCC 27591 / A909 / CDC SS700)</name>
    <dbReference type="NCBI Taxonomy" id="205921"/>
    <lineage>
        <taxon>Bacteria</taxon>
        <taxon>Bacillati</taxon>
        <taxon>Bacillota</taxon>
        <taxon>Bacilli</taxon>
        <taxon>Lactobacillales</taxon>
        <taxon>Streptococcaceae</taxon>
        <taxon>Streptococcus</taxon>
    </lineage>
</organism>
<dbReference type="EC" id="2.7.1.23" evidence="1"/>
<dbReference type="EMBL" id="CP000114">
    <property type="protein sequence ID" value="ABA44522.1"/>
    <property type="molecule type" value="Genomic_DNA"/>
</dbReference>
<dbReference type="SMR" id="Q3K103"/>
<dbReference type="KEGG" id="sak:SAK_1179"/>
<dbReference type="HOGENOM" id="CLU_008831_0_3_9"/>
<dbReference type="GO" id="GO:0005737">
    <property type="term" value="C:cytoplasm"/>
    <property type="evidence" value="ECO:0007669"/>
    <property type="project" value="UniProtKB-SubCell"/>
</dbReference>
<dbReference type="GO" id="GO:0005524">
    <property type="term" value="F:ATP binding"/>
    <property type="evidence" value="ECO:0007669"/>
    <property type="project" value="UniProtKB-KW"/>
</dbReference>
<dbReference type="GO" id="GO:0046872">
    <property type="term" value="F:metal ion binding"/>
    <property type="evidence" value="ECO:0007669"/>
    <property type="project" value="UniProtKB-UniRule"/>
</dbReference>
<dbReference type="GO" id="GO:0051287">
    <property type="term" value="F:NAD binding"/>
    <property type="evidence" value="ECO:0007669"/>
    <property type="project" value="UniProtKB-ARBA"/>
</dbReference>
<dbReference type="GO" id="GO:0003951">
    <property type="term" value="F:NAD+ kinase activity"/>
    <property type="evidence" value="ECO:0007669"/>
    <property type="project" value="UniProtKB-UniRule"/>
</dbReference>
<dbReference type="GO" id="GO:0019674">
    <property type="term" value="P:NAD metabolic process"/>
    <property type="evidence" value="ECO:0007669"/>
    <property type="project" value="InterPro"/>
</dbReference>
<dbReference type="GO" id="GO:0006741">
    <property type="term" value="P:NADP biosynthetic process"/>
    <property type="evidence" value="ECO:0007669"/>
    <property type="project" value="UniProtKB-UniRule"/>
</dbReference>
<dbReference type="Gene3D" id="3.40.50.10330">
    <property type="entry name" value="Probable inorganic polyphosphate/atp-NAD kinase, domain 1"/>
    <property type="match status" value="1"/>
</dbReference>
<dbReference type="Gene3D" id="2.60.200.30">
    <property type="entry name" value="Probable inorganic polyphosphate/atp-NAD kinase, domain 2"/>
    <property type="match status" value="1"/>
</dbReference>
<dbReference type="HAMAP" id="MF_00361">
    <property type="entry name" value="NAD_kinase"/>
    <property type="match status" value="1"/>
</dbReference>
<dbReference type="InterPro" id="IPR017438">
    <property type="entry name" value="ATP-NAD_kinase_N"/>
</dbReference>
<dbReference type="InterPro" id="IPR017437">
    <property type="entry name" value="ATP-NAD_kinase_PpnK-typ_C"/>
</dbReference>
<dbReference type="InterPro" id="IPR016064">
    <property type="entry name" value="NAD/diacylglycerol_kinase_sf"/>
</dbReference>
<dbReference type="InterPro" id="IPR002504">
    <property type="entry name" value="NADK"/>
</dbReference>
<dbReference type="NCBIfam" id="NF003424">
    <property type="entry name" value="PRK04885.1"/>
    <property type="match status" value="1"/>
</dbReference>
<dbReference type="PANTHER" id="PTHR20275">
    <property type="entry name" value="NAD KINASE"/>
    <property type="match status" value="1"/>
</dbReference>
<dbReference type="PANTHER" id="PTHR20275:SF0">
    <property type="entry name" value="NAD KINASE"/>
    <property type="match status" value="1"/>
</dbReference>
<dbReference type="Pfam" id="PF01513">
    <property type="entry name" value="NAD_kinase"/>
    <property type="match status" value="1"/>
</dbReference>
<dbReference type="Pfam" id="PF20143">
    <property type="entry name" value="NAD_kinase_C"/>
    <property type="match status" value="1"/>
</dbReference>
<dbReference type="SUPFAM" id="SSF111331">
    <property type="entry name" value="NAD kinase/diacylglycerol kinase-like"/>
    <property type="match status" value="1"/>
</dbReference>
<feature type="chain" id="PRO_0000229691" description="NAD kinase">
    <location>
        <begin position="1"/>
        <end position="275"/>
    </location>
</feature>
<feature type="active site" description="Proton acceptor" evidence="1">
    <location>
        <position position="53"/>
    </location>
</feature>
<feature type="binding site" evidence="1">
    <location>
        <begin position="53"/>
        <end position="54"/>
    </location>
    <ligand>
        <name>NAD(+)</name>
        <dbReference type="ChEBI" id="CHEBI:57540"/>
    </ligand>
</feature>
<feature type="binding site" evidence="1">
    <location>
        <begin position="129"/>
        <end position="130"/>
    </location>
    <ligand>
        <name>NAD(+)</name>
        <dbReference type="ChEBI" id="CHEBI:57540"/>
    </ligand>
</feature>
<feature type="binding site" evidence="1">
    <location>
        <position position="155"/>
    </location>
    <ligand>
        <name>NAD(+)</name>
        <dbReference type="ChEBI" id="CHEBI:57540"/>
    </ligand>
</feature>
<feature type="binding site" evidence="1">
    <location>
        <position position="157"/>
    </location>
    <ligand>
        <name>NAD(+)</name>
        <dbReference type="ChEBI" id="CHEBI:57540"/>
    </ligand>
</feature>
<feature type="binding site" evidence="1">
    <location>
        <begin position="168"/>
        <end position="173"/>
    </location>
    <ligand>
        <name>NAD(+)</name>
        <dbReference type="ChEBI" id="CHEBI:57540"/>
    </ligand>
</feature>
<sequence>MNFTDRATRVAIIANGKYQSKRVASKLFAAFKHDPDFYLSKKDPDIVISIGGDGMLLSAFHMYEKQLDKVRFVGVHTGHLGFYTDYRDFEVDTLINNLKNDEGEQISYPILKVTITLEDGRVIRARALNESTIKRIEKTMVADVVINQVVFERFRGDGILVSTPTGSTAYNKSLGGAVLHPTIEALQLTEISSLNNRVYRTLGSSVIIPKKDAIEIVPKRVGVYTISIDNKTVHYKNVTKIEYSIDEKSINFVSTPSHTSFWERVNDAFIGEPEH</sequence>
<name>NADK_STRA1</name>
<protein>
    <recommendedName>
        <fullName evidence="1">NAD kinase</fullName>
        <ecNumber evidence="1">2.7.1.23</ecNumber>
    </recommendedName>
    <alternativeName>
        <fullName evidence="1">ATP-dependent NAD kinase</fullName>
    </alternativeName>
</protein>
<evidence type="ECO:0000255" key="1">
    <source>
        <dbReference type="HAMAP-Rule" id="MF_00361"/>
    </source>
</evidence>
<accession>Q3K103</accession>
<gene>
    <name evidence="1" type="primary">nadK</name>
    <name type="ordered locus">SAK_1179</name>
</gene>